<keyword id="KW-0053">Apoptosis</keyword>
<keyword id="KW-0963">Cytoplasm</keyword>
<keyword id="KW-0238">DNA-binding</keyword>
<keyword id="KW-1017">Isopeptide bond</keyword>
<keyword id="KW-0479">Metal-binding</keyword>
<keyword id="KW-0539">Nucleus</keyword>
<keyword id="KW-0597">Phosphoprotein</keyword>
<keyword id="KW-1185">Reference proteome</keyword>
<keyword id="KW-0678">Repressor</keyword>
<keyword id="KW-0804">Transcription</keyword>
<keyword id="KW-0805">Transcription regulation</keyword>
<keyword id="KW-0832">Ubl conjugation</keyword>
<keyword id="KW-0862">Zinc</keyword>
<keyword id="KW-0863">Zinc-finger</keyword>
<organism>
    <name type="scientific">Mus musculus</name>
    <name type="common">Mouse</name>
    <dbReference type="NCBI Taxonomy" id="10090"/>
    <lineage>
        <taxon>Eukaryota</taxon>
        <taxon>Metazoa</taxon>
        <taxon>Chordata</taxon>
        <taxon>Craniata</taxon>
        <taxon>Vertebrata</taxon>
        <taxon>Euteleostomi</taxon>
        <taxon>Mammalia</taxon>
        <taxon>Eutheria</taxon>
        <taxon>Euarchontoglires</taxon>
        <taxon>Glires</taxon>
        <taxon>Rodentia</taxon>
        <taxon>Myomorpha</taxon>
        <taxon>Muroidea</taxon>
        <taxon>Muridae</taxon>
        <taxon>Murinae</taxon>
        <taxon>Mus</taxon>
        <taxon>Mus</taxon>
    </lineage>
</organism>
<dbReference type="EMBL" id="AK033024">
    <property type="protein sequence ID" value="BAC28131.1"/>
    <property type="molecule type" value="mRNA"/>
</dbReference>
<dbReference type="EMBL" id="BC053016">
    <property type="protein sequence ID" value="AAH53016.1"/>
    <property type="molecule type" value="mRNA"/>
</dbReference>
<dbReference type="EMBL" id="BC080287">
    <property type="protein sequence ID" value="AAH80287.1"/>
    <property type="molecule type" value="mRNA"/>
</dbReference>
<dbReference type="EMBL" id="BC138324">
    <property type="protein sequence ID" value="AAI38325.1"/>
    <property type="molecule type" value="mRNA"/>
</dbReference>
<dbReference type="EMBL" id="BC138325">
    <property type="protein sequence ID" value="AAI38326.1"/>
    <property type="molecule type" value="mRNA"/>
</dbReference>
<dbReference type="EMBL" id="AF101779">
    <property type="protein sequence ID" value="AAD42945.1"/>
    <property type="status" value="ALT_INIT"/>
    <property type="molecule type" value="mRNA"/>
</dbReference>
<dbReference type="CCDS" id="CCDS39579.1"/>
<dbReference type="RefSeq" id="NP_062717.2">
    <property type="nucleotide sequence ID" value="NM_019743.3"/>
</dbReference>
<dbReference type="SMR" id="Q8CCI5"/>
<dbReference type="BioGRID" id="207918">
    <property type="interactions" value="16"/>
</dbReference>
<dbReference type="FunCoup" id="Q8CCI5">
    <property type="interactions" value="5015"/>
</dbReference>
<dbReference type="IntAct" id="Q8CCI5">
    <property type="interactions" value="13"/>
</dbReference>
<dbReference type="MINT" id="Q8CCI5"/>
<dbReference type="STRING" id="10090.ENSMUSP00000098677"/>
<dbReference type="GlyGen" id="Q8CCI5">
    <property type="glycosylation" value="1 site"/>
</dbReference>
<dbReference type="iPTMnet" id="Q8CCI5"/>
<dbReference type="PhosphoSitePlus" id="Q8CCI5"/>
<dbReference type="jPOST" id="Q8CCI5"/>
<dbReference type="PaxDb" id="10090-ENSMUSP00000098677"/>
<dbReference type="PeptideAtlas" id="Q8CCI5"/>
<dbReference type="ProteomicsDB" id="256853"/>
<dbReference type="Pumba" id="Q8CCI5"/>
<dbReference type="Antibodypedia" id="7772">
    <property type="antibodies" value="497 antibodies from 37 providers"/>
</dbReference>
<dbReference type="DNASU" id="56353"/>
<dbReference type="Ensembl" id="ENSMUST00000101118.4">
    <property type="protein sequence ID" value="ENSMUSP00000098677.3"/>
    <property type="gene ID" value="ENSMUSG00000072872.4"/>
</dbReference>
<dbReference type="GeneID" id="56353"/>
<dbReference type="KEGG" id="mmu:56353"/>
<dbReference type="UCSC" id="uc009dbw.1">
    <property type="organism name" value="mouse"/>
</dbReference>
<dbReference type="AGR" id="MGI:1929059"/>
<dbReference type="CTD" id="23429"/>
<dbReference type="MGI" id="MGI:1929059">
    <property type="gene designation" value="Rybp"/>
</dbReference>
<dbReference type="VEuPathDB" id="HostDB:ENSMUSG00000072872"/>
<dbReference type="eggNOG" id="KOG4477">
    <property type="taxonomic scope" value="Eukaryota"/>
</dbReference>
<dbReference type="GeneTree" id="ENSGT00390000013995"/>
<dbReference type="HOGENOM" id="CLU_095374_0_0_1"/>
<dbReference type="InParanoid" id="Q8CCI5"/>
<dbReference type="OMA" id="PEREHGP"/>
<dbReference type="OrthoDB" id="10063208at2759"/>
<dbReference type="PhylomeDB" id="Q8CCI5"/>
<dbReference type="TreeFam" id="TF350501"/>
<dbReference type="Reactome" id="R-MMU-8939243">
    <property type="pathway name" value="RUNX1 interacts with co-factors whose precise effect on RUNX1 targets is not known"/>
</dbReference>
<dbReference type="Reactome" id="R-MMU-8953750">
    <property type="pathway name" value="Transcriptional Regulation by E2F6"/>
</dbReference>
<dbReference type="BioGRID-ORCS" id="56353">
    <property type="hits" value="5 hits in 80 CRISPR screens"/>
</dbReference>
<dbReference type="ChiTaRS" id="Rybp">
    <property type="organism name" value="mouse"/>
</dbReference>
<dbReference type="PRO" id="PR:Q8CCI5"/>
<dbReference type="Proteomes" id="UP000000589">
    <property type="component" value="Chromosome 6"/>
</dbReference>
<dbReference type="RNAct" id="Q8CCI5">
    <property type="molecule type" value="protein"/>
</dbReference>
<dbReference type="Bgee" id="ENSMUSG00000072872">
    <property type="expression patterns" value="Expressed in manus and 235 other cell types or tissues"/>
</dbReference>
<dbReference type="GO" id="GO:0005737">
    <property type="term" value="C:cytoplasm"/>
    <property type="evidence" value="ECO:0007669"/>
    <property type="project" value="UniProtKB-SubCell"/>
</dbReference>
<dbReference type="GO" id="GO:0005654">
    <property type="term" value="C:nucleoplasm"/>
    <property type="evidence" value="ECO:0000314"/>
    <property type="project" value="MGI"/>
</dbReference>
<dbReference type="GO" id="GO:0005634">
    <property type="term" value="C:nucleus"/>
    <property type="evidence" value="ECO:0000314"/>
    <property type="project" value="MGI"/>
</dbReference>
<dbReference type="GO" id="GO:0031519">
    <property type="term" value="C:PcG protein complex"/>
    <property type="evidence" value="ECO:0007669"/>
    <property type="project" value="Ensembl"/>
</dbReference>
<dbReference type="GO" id="GO:0003677">
    <property type="term" value="F:DNA binding"/>
    <property type="evidence" value="ECO:0000314"/>
    <property type="project" value="MGI"/>
</dbReference>
<dbReference type="GO" id="GO:0003714">
    <property type="term" value="F:transcription corepressor activity"/>
    <property type="evidence" value="ECO:0000314"/>
    <property type="project" value="MGI"/>
</dbReference>
<dbReference type="GO" id="GO:0008270">
    <property type="term" value="F:zinc ion binding"/>
    <property type="evidence" value="ECO:0007669"/>
    <property type="project" value="UniProtKB-KW"/>
</dbReference>
<dbReference type="GO" id="GO:0006915">
    <property type="term" value="P:apoptotic process"/>
    <property type="evidence" value="ECO:0007669"/>
    <property type="project" value="UniProtKB-KW"/>
</dbReference>
<dbReference type="GO" id="GO:0006338">
    <property type="term" value="P:chromatin remodeling"/>
    <property type="evidence" value="ECO:0007669"/>
    <property type="project" value="Ensembl"/>
</dbReference>
<dbReference type="GO" id="GO:0032435">
    <property type="term" value="P:negative regulation of proteasomal ubiquitin-dependent protein catabolic process"/>
    <property type="evidence" value="ECO:0000250"/>
    <property type="project" value="UniProtKB"/>
</dbReference>
<dbReference type="GO" id="GO:0000122">
    <property type="term" value="P:negative regulation of transcription by RNA polymerase II"/>
    <property type="evidence" value="ECO:0000314"/>
    <property type="project" value="MGI"/>
</dbReference>
<dbReference type="GO" id="GO:0043065">
    <property type="term" value="P:positive regulation of apoptotic process"/>
    <property type="evidence" value="ECO:0000250"/>
    <property type="project" value="UniProtKB"/>
</dbReference>
<dbReference type="GO" id="GO:0045893">
    <property type="term" value="P:positive regulation of DNA-templated transcription"/>
    <property type="evidence" value="ECO:0000250"/>
    <property type="project" value="UniProtKB"/>
</dbReference>
<dbReference type="FunFam" id="4.10.1060.10:FF:000009">
    <property type="entry name" value="YY1 associated factor 2"/>
    <property type="match status" value="1"/>
</dbReference>
<dbReference type="Gene3D" id="4.10.1060.10">
    <property type="entry name" value="Zinc finger, RanBP2-type"/>
    <property type="match status" value="1"/>
</dbReference>
<dbReference type="InterPro" id="IPR039958">
    <property type="entry name" value="RYBP/YAF2"/>
</dbReference>
<dbReference type="InterPro" id="IPR033774">
    <property type="entry name" value="YAF2_RYBP"/>
</dbReference>
<dbReference type="InterPro" id="IPR001876">
    <property type="entry name" value="Znf_RanBP2"/>
</dbReference>
<dbReference type="InterPro" id="IPR036443">
    <property type="entry name" value="Znf_RanBP2_sf"/>
</dbReference>
<dbReference type="PANTHER" id="PTHR12920:SF3">
    <property type="entry name" value="RING1 AND YY1-BINDING PROTEIN"/>
    <property type="match status" value="1"/>
</dbReference>
<dbReference type="PANTHER" id="PTHR12920">
    <property type="entry name" value="RYBP AND YAF2-RELATED"/>
    <property type="match status" value="1"/>
</dbReference>
<dbReference type="Pfam" id="PF17219">
    <property type="entry name" value="YAF2_RYBP"/>
    <property type="match status" value="1"/>
</dbReference>
<dbReference type="Pfam" id="PF00641">
    <property type="entry name" value="Zn_ribbon_RanBP"/>
    <property type="match status" value="1"/>
</dbReference>
<dbReference type="SMART" id="SM00547">
    <property type="entry name" value="ZnF_RBZ"/>
    <property type="match status" value="1"/>
</dbReference>
<dbReference type="SUPFAM" id="SSF90209">
    <property type="entry name" value="Ran binding protein zinc finger-like"/>
    <property type="match status" value="1"/>
</dbReference>
<dbReference type="PROSITE" id="PS01358">
    <property type="entry name" value="ZF_RANBP2_1"/>
    <property type="match status" value="1"/>
</dbReference>
<dbReference type="PROSITE" id="PS50199">
    <property type="entry name" value="ZF_RANBP2_2"/>
    <property type="match status" value="1"/>
</dbReference>
<proteinExistence type="evidence at protein level"/>
<sequence>MTMGDKKSPTRPKRQAKPAADEGFWDCSVCTFRNSAEAFKCSICDVRKGTSTRKPRINSQLVAQQVAQQYATPPPPKKEKKEKVEKPDKEKPEKDKDISPSVTKKNTNKKTKPKSDILKDPPSEANSIQSANATTKTSETNHTSRPRLKNVDRSTAQQLAVTVGNVTVIITDFKEKTRSSSTSSSTVTSSAGSEQQNQSSSGSESTDKGSSRSSTPKGDMSAVNDESF</sequence>
<comment type="function">
    <text evidence="1 8 9 11 12 13">Component of a Polycomb group (PcG) multiprotein PRC1-like complex, a complex class required to maintain the transcriptionally repressive state of many genes, including Hox genes, throughout development. PcG PRC1-like complex acts via chromatin remodeling and modification of histones; it mediates monoubiquitination of histone H2A 'Lys-119', rendering chromatin heritably changed in its expressibility (PubMed:22325148, PubMed:28596365). Component of a PRC1-like complex that mediates monoubiquitination of histone H2A 'Lys-119' on the X chromosome and is required for normal silencing of one copy of the X chromosome in XX females (PubMed:28596365). May stimulate ubiquitination of histone H2A 'Lys-119' by recruiting the complex to target sites (PubMed:22325148, PubMed:28596365). Inhibits ubiquitination and subsequent degradation of TP53, and thereby plays a role in regulating transcription of TP53 target genes (By similarity). May also regulate the ubiquitin-mediated proteasomal degradation of other proteins like FANK1 to regulate apoptosis (PubMed:17874297). May be implicated in the regulation of the transcription as a repressor of the transcriptional activity of E4TF1 (By similarity). May bind to DNA (PubMed:19170609). May play a role in the repression of tumor growth and metastasis in breast cancer by down-regulating SRRM3 (PubMed:27748911).</text>
</comment>
<comment type="subunit">
    <text evidence="1 4 7 8 9 10 11 13">Monomer. Component of repressive BCOR complex containing Polycomb group subcomplex at least composed of BCOR, PCGF1, RING1 and RNF2/RING2 (By similarity). Component of PCR1-like complexes (PubMed:22325148, PubMed:28596365). Interacts with PCGF1. Part of a PCR1-like complex that contains AUTS2, PCGF5, RNF2, CSNK2B and RYBP. Interacts with RNF2; the interaction is direct (By similarity). Interacts with CBX2, YAF2, RING1 and RNF2 (PubMed:10369680, PubMed:19170609, PubMed:22226355). Interacts with ubiquitin and ubiquitinated proteins (PubMed:17070805). Interacts with ubiquitinated histone H2A (PubMed:17070805). Interacts with apoptin, DEDD, FADD, CASP8, CASP10, YY1 and GABPB1. Together with GABPB1 and YY1, it forms a ternary complex, probably being the bridge factor between these two transcription factors. Interacts with MDM2, and thereby inhibits ubiquitination of TP53. Identified in a ternary complex containing MDM2, TP53 and RYBP. Interacts with FANK1; may prevent the ubiquitin-mediated proteasomal degradation of FANK1 (By similarity). Interacts with IFT57 (PubMed:17874297).</text>
</comment>
<comment type="interaction">
    <interactant intactId="EBI-929290">
        <id>Q8CCI5</id>
    </interactant>
    <interactant intactId="EBI-360174">
        <id>P30658</id>
        <label>Cbx2</label>
    </interactant>
    <organismsDiffer>false</organismsDiffer>
    <experiments>3</experiments>
</comment>
<comment type="interaction">
    <interactant intactId="EBI-929290">
        <id>Q8CCI5</id>
    </interactant>
    <interactant intactId="EBI-929310">
        <id>O35730</id>
        <label>Ring1</label>
    </interactant>
    <organismsDiffer>false</organismsDiffer>
    <experiments>4</experiments>
</comment>
<comment type="interaction">
    <interactant intactId="EBI-929290">
        <id>Q8CCI5</id>
    </interactant>
    <interactant intactId="EBI-927321">
        <id>Q9CQJ4</id>
        <label>Rnf2</label>
    </interactant>
    <organismsDiffer>false</organismsDiffer>
    <experiments>8</experiments>
</comment>
<comment type="interaction">
    <interactant intactId="EBI-929290">
        <id>Q8CCI5</id>
    </interactant>
    <interactant intactId="EBI-765538">
        <id>P25490</id>
        <label>YY1</label>
    </interactant>
    <organismsDiffer>true</organismsDiffer>
    <experiments>2</experiments>
</comment>
<comment type="subcellular location">
    <subcellularLocation>
        <location evidence="7">Nucleus</location>
    </subcellularLocation>
    <subcellularLocation>
        <location evidence="1">Cytoplasm</location>
    </subcellularLocation>
    <subcellularLocation>
        <location evidence="7">Nucleus</location>
        <location evidence="7">Nucleoplasm</location>
    </subcellularLocation>
    <text evidence="7">Primarily found in the nucleus. Detected in a punctate pattern likely to represent Polycomb group (PcG) bodies.</text>
</comment>
<comment type="tissue specificity">
    <text evidence="10">Expressed in embryonic stem cells.</text>
</comment>
<comment type="developmental stage">
    <text evidence="5">At 9.0 dpc, selectively expressed in cells of the developing nervous system and from day E.5 onwards, expressed ubiquitously.</text>
</comment>
<comment type="domain">
    <text evidence="9">Intrinsically unstructured in the absence of binding partners. Folds upon binding to DNA or RNF2.</text>
</comment>
<comment type="PTM">
    <text>Monoubiquitinated.</text>
</comment>
<comment type="disruption phenotype">
    <text evidence="6">Embryonically lethal. Embryos die at early postimplantation stage.</text>
</comment>
<comment type="sequence caution" evidence="14">
    <conflict type="erroneous initiation">
        <sequence resource="EMBL-CDS" id="AAD42945"/>
    </conflict>
</comment>
<reference key="1">
    <citation type="journal article" date="2005" name="Science">
        <title>The transcriptional landscape of the mammalian genome.</title>
        <authorList>
            <person name="Carninci P."/>
            <person name="Kasukawa T."/>
            <person name="Katayama S."/>
            <person name="Gough J."/>
            <person name="Frith M.C."/>
            <person name="Maeda N."/>
            <person name="Oyama R."/>
            <person name="Ravasi T."/>
            <person name="Lenhard B."/>
            <person name="Wells C."/>
            <person name="Kodzius R."/>
            <person name="Shimokawa K."/>
            <person name="Bajic V.B."/>
            <person name="Brenner S.E."/>
            <person name="Batalov S."/>
            <person name="Forrest A.R."/>
            <person name="Zavolan M."/>
            <person name="Davis M.J."/>
            <person name="Wilming L.G."/>
            <person name="Aidinis V."/>
            <person name="Allen J.E."/>
            <person name="Ambesi-Impiombato A."/>
            <person name="Apweiler R."/>
            <person name="Aturaliya R.N."/>
            <person name="Bailey T.L."/>
            <person name="Bansal M."/>
            <person name="Baxter L."/>
            <person name="Beisel K.W."/>
            <person name="Bersano T."/>
            <person name="Bono H."/>
            <person name="Chalk A.M."/>
            <person name="Chiu K.P."/>
            <person name="Choudhary V."/>
            <person name="Christoffels A."/>
            <person name="Clutterbuck D.R."/>
            <person name="Crowe M.L."/>
            <person name="Dalla E."/>
            <person name="Dalrymple B.P."/>
            <person name="de Bono B."/>
            <person name="Della Gatta G."/>
            <person name="di Bernardo D."/>
            <person name="Down T."/>
            <person name="Engstrom P."/>
            <person name="Fagiolini M."/>
            <person name="Faulkner G."/>
            <person name="Fletcher C.F."/>
            <person name="Fukushima T."/>
            <person name="Furuno M."/>
            <person name="Futaki S."/>
            <person name="Gariboldi M."/>
            <person name="Georgii-Hemming P."/>
            <person name="Gingeras T.R."/>
            <person name="Gojobori T."/>
            <person name="Green R.E."/>
            <person name="Gustincich S."/>
            <person name="Harbers M."/>
            <person name="Hayashi Y."/>
            <person name="Hensch T.K."/>
            <person name="Hirokawa N."/>
            <person name="Hill D."/>
            <person name="Huminiecki L."/>
            <person name="Iacono M."/>
            <person name="Ikeo K."/>
            <person name="Iwama A."/>
            <person name="Ishikawa T."/>
            <person name="Jakt M."/>
            <person name="Kanapin A."/>
            <person name="Katoh M."/>
            <person name="Kawasawa Y."/>
            <person name="Kelso J."/>
            <person name="Kitamura H."/>
            <person name="Kitano H."/>
            <person name="Kollias G."/>
            <person name="Krishnan S.P."/>
            <person name="Kruger A."/>
            <person name="Kummerfeld S.K."/>
            <person name="Kurochkin I.V."/>
            <person name="Lareau L.F."/>
            <person name="Lazarevic D."/>
            <person name="Lipovich L."/>
            <person name="Liu J."/>
            <person name="Liuni S."/>
            <person name="McWilliam S."/>
            <person name="Madan Babu M."/>
            <person name="Madera M."/>
            <person name="Marchionni L."/>
            <person name="Matsuda H."/>
            <person name="Matsuzawa S."/>
            <person name="Miki H."/>
            <person name="Mignone F."/>
            <person name="Miyake S."/>
            <person name="Morris K."/>
            <person name="Mottagui-Tabar S."/>
            <person name="Mulder N."/>
            <person name="Nakano N."/>
            <person name="Nakauchi H."/>
            <person name="Ng P."/>
            <person name="Nilsson R."/>
            <person name="Nishiguchi S."/>
            <person name="Nishikawa S."/>
            <person name="Nori F."/>
            <person name="Ohara O."/>
            <person name="Okazaki Y."/>
            <person name="Orlando V."/>
            <person name="Pang K.C."/>
            <person name="Pavan W.J."/>
            <person name="Pavesi G."/>
            <person name="Pesole G."/>
            <person name="Petrovsky N."/>
            <person name="Piazza S."/>
            <person name="Reed J."/>
            <person name="Reid J.F."/>
            <person name="Ring B.Z."/>
            <person name="Ringwald M."/>
            <person name="Rost B."/>
            <person name="Ruan Y."/>
            <person name="Salzberg S.L."/>
            <person name="Sandelin A."/>
            <person name="Schneider C."/>
            <person name="Schoenbach C."/>
            <person name="Sekiguchi K."/>
            <person name="Semple C.A."/>
            <person name="Seno S."/>
            <person name="Sessa L."/>
            <person name="Sheng Y."/>
            <person name="Shibata Y."/>
            <person name="Shimada H."/>
            <person name="Shimada K."/>
            <person name="Silva D."/>
            <person name="Sinclair B."/>
            <person name="Sperling S."/>
            <person name="Stupka E."/>
            <person name="Sugiura K."/>
            <person name="Sultana R."/>
            <person name="Takenaka Y."/>
            <person name="Taki K."/>
            <person name="Tammoja K."/>
            <person name="Tan S.L."/>
            <person name="Tang S."/>
            <person name="Taylor M.S."/>
            <person name="Tegner J."/>
            <person name="Teichmann S.A."/>
            <person name="Ueda H.R."/>
            <person name="van Nimwegen E."/>
            <person name="Verardo R."/>
            <person name="Wei C.L."/>
            <person name="Yagi K."/>
            <person name="Yamanishi H."/>
            <person name="Zabarovsky E."/>
            <person name="Zhu S."/>
            <person name="Zimmer A."/>
            <person name="Hide W."/>
            <person name="Bult C."/>
            <person name="Grimmond S.M."/>
            <person name="Teasdale R.D."/>
            <person name="Liu E.T."/>
            <person name="Brusic V."/>
            <person name="Quackenbush J."/>
            <person name="Wahlestedt C."/>
            <person name="Mattick J.S."/>
            <person name="Hume D.A."/>
            <person name="Kai C."/>
            <person name="Sasaki D."/>
            <person name="Tomaru Y."/>
            <person name="Fukuda S."/>
            <person name="Kanamori-Katayama M."/>
            <person name="Suzuki M."/>
            <person name="Aoki J."/>
            <person name="Arakawa T."/>
            <person name="Iida J."/>
            <person name="Imamura K."/>
            <person name="Itoh M."/>
            <person name="Kato T."/>
            <person name="Kawaji H."/>
            <person name="Kawagashira N."/>
            <person name="Kawashima T."/>
            <person name="Kojima M."/>
            <person name="Kondo S."/>
            <person name="Konno H."/>
            <person name="Nakano K."/>
            <person name="Ninomiya N."/>
            <person name="Nishio T."/>
            <person name="Okada M."/>
            <person name="Plessy C."/>
            <person name="Shibata K."/>
            <person name="Shiraki T."/>
            <person name="Suzuki S."/>
            <person name="Tagami M."/>
            <person name="Waki K."/>
            <person name="Watahiki A."/>
            <person name="Okamura-Oho Y."/>
            <person name="Suzuki H."/>
            <person name="Kawai J."/>
            <person name="Hayashizaki Y."/>
        </authorList>
    </citation>
    <scope>NUCLEOTIDE SEQUENCE [LARGE SCALE MRNA]</scope>
    <source>
        <strain>C57BL/6J</strain>
        <tissue>Embryonic gonad</tissue>
    </source>
</reference>
<reference key="2">
    <citation type="journal article" date="2004" name="Genome Res.">
        <title>The status, quality, and expansion of the NIH full-length cDNA project: the Mammalian Gene Collection (MGC).</title>
        <authorList>
            <consortium name="The MGC Project Team"/>
        </authorList>
    </citation>
    <scope>NUCLEOTIDE SEQUENCE [LARGE SCALE MRNA]</scope>
    <source>
        <strain>C57BL/6J</strain>
        <tissue>Brain</tissue>
    </source>
</reference>
<reference key="3">
    <citation type="journal article" date="1999" name="EMBO J.">
        <title>RYBP, a new repressor protein that interacts with components of the mammalian Polycomb complex, and with the transcription factor YY1.</title>
        <authorList>
            <person name="Garcia E."/>
            <person name="Marcos-Gutierrez C."/>
            <person name="del Mar Lorente M."/>
            <person name="Moreno J.C."/>
            <person name="Vidal M."/>
        </authorList>
    </citation>
    <scope>NUCLEOTIDE SEQUENCE [MRNA] OF 2-228</scope>
    <scope>INTERACTION WITH YAF2; YY1; CBX2; RING1 AND RNF2</scope>
    <source>
        <strain>C57BL/10</strain>
    </source>
</reference>
<reference key="4">
    <citation type="journal article" date="2004" name="Cell Death Differ.">
        <title>Human death effector domain-associated factor interacts with the viral apoptosis agonist Apoptin and exerts tumor-preferential cell killing.</title>
        <authorList>
            <person name="Danen-van Oorschot A.A.M.M."/>
            <person name="Voskamp P."/>
            <person name="Seelen M.C.M.J."/>
            <person name="van Miltenburg M.H.A.M."/>
            <person name="Bolk M.W."/>
            <person name="Tait S.W."/>
            <person name="Boesen-de Cock J.G.R."/>
            <person name="Rohn J.L."/>
            <person name="Borst J."/>
            <person name="Noteborn M.H.M."/>
        </authorList>
    </citation>
    <scope>DEVELOPMENTAL STAGE</scope>
</reference>
<reference key="5">
    <citation type="journal article" date="2005" name="Mol. Cell. Biol.">
        <title>Rybp/DEDAF is required for early postimplantation and for central nervous system development.</title>
        <authorList>
            <person name="Pirity M.K."/>
            <person name="Locker J."/>
            <person name="Schreiber-Agus N."/>
        </authorList>
    </citation>
    <scope>DISRUPTION PHENOTYPE</scope>
</reference>
<reference key="6">
    <citation type="journal article" date="2006" name="FEBS Lett.">
        <title>The Polycomb-associated protein Rybp is a ubiquitin binding protein.</title>
        <authorList>
            <person name="Arrigoni R."/>
            <person name="Alam S.L."/>
            <person name="Wamstad J.A."/>
            <person name="Bardwell V.J."/>
            <person name="Sundquist W.I."/>
            <person name="Schreiber-Agus N."/>
        </authorList>
    </citation>
    <scope>SUBUNIT</scope>
    <scope>INTERACTION WITH RING1 AND RNF2</scope>
    <scope>SUBCELLULAR LOCATION</scope>
    <scope>MUTAGENESIS OF 31-THR-PHE-32</scope>
    <scope>UBIQUITINATION</scope>
</reference>
<reference key="7">
    <citation type="journal article" date="2007" name="Apoptosis">
        <title>Rybp interacts with Hippi and enhances Hippi-mediated apoptosis.</title>
        <authorList>
            <person name="Stanton S.E."/>
            <person name="Blanck J.K."/>
            <person name="Locker J."/>
            <person name="Schreiber-Agus N."/>
        </authorList>
    </citation>
    <scope>INTERACTION WITH IFT57</scope>
    <scope>FUNCTION</scope>
</reference>
<reference key="8">
    <citation type="journal article" date="2009" name="Biochemistry">
        <title>The transcriptional repressor RYBP is a natively unfolded protein which folds upon binding to DNA.</title>
        <authorList>
            <person name="Neira J.L."/>
            <person name="Roman-Trufero M."/>
            <person name="Contreras L.M."/>
            <person name="Prieto J."/>
            <person name="Singh G."/>
            <person name="Barrera F.N."/>
            <person name="Renart M.L."/>
            <person name="Vidal M."/>
        </authorList>
    </citation>
    <scope>INTERACTION WITH RNF2</scope>
    <scope>SUBUNIT</scope>
    <scope>DOMAIN</scope>
    <scope>DNA-BINDING</scope>
    <scope>CIRCULAR DICHROISM</scope>
</reference>
<reference key="9">
    <citation type="journal article" date="2010" name="Cell">
        <title>A tissue-specific atlas of mouse protein phosphorylation and expression.</title>
        <authorList>
            <person name="Huttlin E.L."/>
            <person name="Jedrychowski M.P."/>
            <person name="Elias J.E."/>
            <person name="Goswami T."/>
            <person name="Rad R."/>
            <person name="Beausoleil S.A."/>
            <person name="Villen J."/>
            <person name="Haas W."/>
            <person name="Sowa M.E."/>
            <person name="Gygi S.P."/>
        </authorList>
    </citation>
    <scope>PHOSPHORYLATION [LARGE SCALE ANALYSIS] AT SER-123; SER-127 AND SER-130</scope>
    <scope>IDENTIFICATION BY MASS SPECTROMETRY [LARGE SCALE ANALYSIS]</scope>
    <source>
        <tissue>Brain</tissue>
        <tissue>Kidney</tissue>
        <tissue>Lung</tissue>
        <tissue>Spleen</tissue>
        <tissue>Testis</tissue>
    </source>
</reference>
<reference key="10">
    <citation type="journal article" date="2012" name="Cell">
        <title>RYBP-PRC1 complexes mediate H2A ubiquitylation at polycomb target sites independently of PRC2 and H3K27me3.</title>
        <authorList>
            <person name="Tavares L."/>
            <person name="Dimitrova E."/>
            <person name="Oxley D."/>
            <person name="Webster J."/>
            <person name="Poot R."/>
            <person name="Demmers J."/>
            <person name="Bezstarosti K."/>
            <person name="Taylor S."/>
            <person name="Ura H."/>
            <person name="Koide H."/>
            <person name="Wutz A."/>
            <person name="Vidal M."/>
            <person name="Elderkin S."/>
            <person name="Brockdorff N."/>
        </authorList>
    </citation>
    <scope>FUNCTION</scope>
    <scope>SUBUNIT</scope>
</reference>
<reference key="11">
    <citation type="journal article" date="2012" name="Cell Stem Cell">
        <title>Nonoverlapping functions of the Polycomb group Cbx family of proteins in embryonic stem cells.</title>
        <authorList>
            <person name="Morey L."/>
            <person name="Pascual G."/>
            <person name="Cozzuto L."/>
            <person name="Roma G."/>
            <person name="Wutz A."/>
            <person name="Benitah S.A."/>
            <person name="Di Croce L."/>
        </authorList>
    </citation>
    <scope>INTERACTION WITH RNF2</scope>
    <scope>TISSUE SPECIFICITY</scope>
</reference>
<reference key="12">
    <citation type="journal article" date="2016" name="Int. J. Oncol.">
        <title>RING1 and YY1 binding protein suppresses breast cancer growth and metastasis.</title>
        <authorList>
            <person name="Zhou H."/>
            <person name="Li J."/>
            <person name="Zhang Z."/>
            <person name="Ye R."/>
            <person name="Shao N."/>
            <person name="Cheang T."/>
            <person name="Wang S."/>
        </authorList>
    </citation>
    <scope>FUNCTION</scope>
</reference>
<reference key="13">
    <citation type="journal article" date="2017" name="Science">
        <title>PCGF3/5-PRC1 initiates Polycomb recruitment in X chromosome inactivation.</title>
        <authorList>
            <person name="Almeida M."/>
            <person name="Pintacuda G."/>
            <person name="Masui O."/>
            <person name="Koseki Y."/>
            <person name="Gdula M."/>
            <person name="Cerase A."/>
            <person name="Brown D."/>
            <person name="Mould A."/>
            <person name="Innocent C."/>
            <person name="Nakayama M."/>
            <person name="Schermelleh L."/>
            <person name="Nesterova T.B."/>
            <person name="Koseki H."/>
            <person name="Brockdorff N."/>
        </authorList>
    </citation>
    <scope>FUNCTION</scope>
    <scope>SUBUNIT</scope>
</reference>
<gene>
    <name type="primary">Rybp</name>
    <name type="synonym">Dedaf</name>
</gene>
<feature type="chain" id="PRO_0000097551" description="RING1 and YY1-binding protein">
    <location>
        <begin position="1"/>
        <end position="228"/>
    </location>
</feature>
<feature type="zinc finger region" description="RanBP2-type" evidence="2">
    <location>
        <begin position="21"/>
        <end position="50"/>
    </location>
</feature>
<feature type="region of interest" description="Disordered" evidence="3">
    <location>
        <begin position="1"/>
        <end position="21"/>
    </location>
</feature>
<feature type="region of interest" description="Disordered" evidence="3">
    <location>
        <begin position="47"/>
        <end position="157"/>
    </location>
</feature>
<feature type="region of interest" description="Interaction with GABPB1 and FANK1" evidence="1">
    <location>
        <begin position="143"/>
        <end position="226"/>
    </location>
</feature>
<feature type="region of interest" description="Disordered" evidence="3">
    <location>
        <begin position="172"/>
        <end position="228"/>
    </location>
</feature>
<feature type="compositionally biased region" description="Basic and acidic residues" evidence="3">
    <location>
        <begin position="76"/>
        <end position="98"/>
    </location>
</feature>
<feature type="compositionally biased region" description="Basic and acidic residues" evidence="3">
    <location>
        <begin position="113"/>
        <end position="122"/>
    </location>
</feature>
<feature type="compositionally biased region" description="Polar residues" evidence="3">
    <location>
        <begin position="124"/>
        <end position="143"/>
    </location>
</feature>
<feature type="compositionally biased region" description="Low complexity" evidence="3">
    <location>
        <begin position="179"/>
        <end position="204"/>
    </location>
</feature>
<feature type="modified residue" description="Phosphoserine" evidence="1">
    <location>
        <position position="99"/>
    </location>
</feature>
<feature type="modified residue" description="Phosphoserine" evidence="15">
    <location>
        <position position="123"/>
    </location>
</feature>
<feature type="modified residue" description="Phosphoserine" evidence="15">
    <location>
        <position position="127"/>
    </location>
</feature>
<feature type="modified residue" description="Phosphoserine" evidence="15">
    <location>
        <position position="130"/>
    </location>
</feature>
<feature type="modified residue" description="Phosphoserine" evidence="1">
    <location>
        <position position="227"/>
    </location>
</feature>
<feature type="cross-link" description="Glycyl lysine isopeptide (Lys-Gly) (interchain with G-Cter in SUMO2)" evidence="1">
    <location>
        <position position="77"/>
    </location>
</feature>
<feature type="mutagenesis site" description="Loss of ubiquitin binding." evidence="7">
    <original>TF</original>
    <variation>AA</variation>
    <location>
        <begin position="31"/>
        <end position="32"/>
    </location>
</feature>
<feature type="sequence conflict" description="In Ref. 3; AAD42945." evidence="14" ref="3">
    <original>T</original>
    <variation>S</variation>
    <location>
        <position position="143"/>
    </location>
</feature>
<evidence type="ECO:0000250" key="1">
    <source>
        <dbReference type="UniProtKB" id="Q8N488"/>
    </source>
</evidence>
<evidence type="ECO:0000255" key="2">
    <source>
        <dbReference type="PROSITE-ProRule" id="PRU00322"/>
    </source>
</evidence>
<evidence type="ECO:0000256" key="3">
    <source>
        <dbReference type="SAM" id="MobiDB-lite"/>
    </source>
</evidence>
<evidence type="ECO:0000269" key="4">
    <source>
    </source>
</evidence>
<evidence type="ECO:0000269" key="5">
    <source>
    </source>
</evidence>
<evidence type="ECO:0000269" key="6">
    <source>
    </source>
</evidence>
<evidence type="ECO:0000269" key="7">
    <source>
    </source>
</evidence>
<evidence type="ECO:0000269" key="8">
    <source>
    </source>
</evidence>
<evidence type="ECO:0000269" key="9">
    <source>
    </source>
</evidence>
<evidence type="ECO:0000269" key="10">
    <source>
    </source>
</evidence>
<evidence type="ECO:0000269" key="11">
    <source>
    </source>
</evidence>
<evidence type="ECO:0000269" key="12">
    <source>
    </source>
</evidence>
<evidence type="ECO:0000269" key="13">
    <source>
    </source>
</evidence>
<evidence type="ECO:0000305" key="14"/>
<evidence type="ECO:0007744" key="15">
    <source>
    </source>
</evidence>
<protein>
    <recommendedName>
        <fullName>RING1 and YY1-binding protein</fullName>
    </recommendedName>
    <alternativeName>
        <fullName>Death effector domain-associated factor</fullName>
        <shortName>DED-associated factor</shortName>
    </alternativeName>
</protein>
<name>RYBP_MOUSE</name>
<accession>Q8CCI5</accession>
<accession>B2RRB6</accession>
<accession>Q9WVK2</accession>